<sequence length="28" mass="3133">RSCPRIWMECTRDSDCMAKCICVAGHCG</sequence>
<dbReference type="PIR" id="S20393">
    <property type="entry name" value="S20393"/>
</dbReference>
<dbReference type="PDB" id="1MCT">
    <property type="method" value="X-ray"/>
    <property type="resolution" value="1.60 A"/>
    <property type="chains" value="I=1-28"/>
</dbReference>
<dbReference type="PDBsum" id="1MCT"/>
<dbReference type="SMR" id="P30709"/>
<dbReference type="MINT" id="P30709"/>
<dbReference type="MEROPS" id="I07.018"/>
<dbReference type="EvolutionaryTrace" id="P30709"/>
<dbReference type="Proteomes" id="UP000504603">
    <property type="component" value="Unplaced"/>
</dbReference>
<dbReference type="GO" id="GO:0005576">
    <property type="term" value="C:extracellular region"/>
    <property type="evidence" value="ECO:0007669"/>
    <property type="project" value="UniProtKB-SubCell"/>
</dbReference>
<dbReference type="GO" id="GO:0004867">
    <property type="term" value="F:serine-type endopeptidase inhibitor activity"/>
    <property type="evidence" value="ECO:0007669"/>
    <property type="project" value="UniProtKB-KW"/>
</dbReference>
<dbReference type="Gene3D" id="4.10.75.20">
    <property type="match status" value="1"/>
</dbReference>
<dbReference type="InterPro" id="IPR000737">
    <property type="entry name" value="Prot_inh_squash"/>
</dbReference>
<dbReference type="InterPro" id="IPR011052">
    <property type="entry name" value="Proteinase_amylase_inhib_sf"/>
</dbReference>
<dbReference type="Pfam" id="PF00299">
    <property type="entry name" value="Squash"/>
    <property type="match status" value="1"/>
</dbReference>
<dbReference type="PRINTS" id="PR00293">
    <property type="entry name" value="SQUASHINHBTR"/>
</dbReference>
<dbReference type="SMART" id="SM00286">
    <property type="entry name" value="PTI"/>
    <property type="match status" value="1"/>
</dbReference>
<dbReference type="SUPFAM" id="SSF57027">
    <property type="entry name" value="Plant inhibitors of proteinases and amylases"/>
    <property type="match status" value="1"/>
</dbReference>
<dbReference type="PROSITE" id="PS00286">
    <property type="entry name" value="SQUASH_INHIBITOR"/>
    <property type="match status" value="1"/>
</dbReference>
<feature type="peptide" id="PRO_0000044389" description="Trypsin inhibitor A">
    <location>
        <begin position="1"/>
        <end position="28"/>
    </location>
</feature>
<feature type="site" description="Reactive bond">
    <location>
        <begin position="5"/>
        <end position="6"/>
    </location>
</feature>
<feature type="disulfide bond">
    <location>
        <begin position="3"/>
        <end position="20"/>
    </location>
</feature>
<feature type="disulfide bond">
    <location>
        <begin position="10"/>
        <end position="22"/>
    </location>
</feature>
<feature type="disulfide bond">
    <location>
        <begin position="16"/>
        <end position="27"/>
    </location>
</feature>
<feature type="helix" evidence="2">
    <location>
        <begin position="13"/>
        <end position="15"/>
    </location>
</feature>
<reference key="1">
    <citation type="journal article" date="1992" name="FEBS Lett.">
        <title>Amino acid sequencing of a trypsin inhibitor by refined 1.6 A X-ray crystal structure of its complex with porcine beta-trypsin.</title>
        <authorList>
            <person name="Huang Q."/>
            <person name="Liu S."/>
            <person name="Tang Y."/>
            <person name="Zeng F."/>
            <person name="Qian R."/>
        </authorList>
    </citation>
    <scope>PROTEIN SEQUENCE</scope>
    <scope>X-RAY CRYSTALLOGRAPHY (1.6 ANGSTROMS)</scope>
</reference>
<keyword id="KW-0002">3D-structure</keyword>
<keyword id="KW-0903">Direct protein sequencing</keyword>
<keyword id="KW-1015">Disulfide bond</keyword>
<keyword id="KW-0960">Knottin</keyword>
<keyword id="KW-0646">Protease inhibitor</keyword>
<keyword id="KW-1185">Reference proteome</keyword>
<keyword id="KW-0964">Secreted</keyword>
<keyword id="KW-0722">Serine protease inhibitor</keyword>
<protein>
    <recommendedName>
        <fullName>Trypsin inhibitor A</fullName>
    </recommendedName>
</protein>
<organism>
    <name type="scientific">Momordica charantia</name>
    <name type="common">Bitter gourd</name>
    <name type="synonym">Balsam pear</name>
    <dbReference type="NCBI Taxonomy" id="3673"/>
    <lineage>
        <taxon>Eukaryota</taxon>
        <taxon>Viridiplantae</taxon>
        <taxon>Streptophyta</taxon>
        <taxon>Embryophyta</taxon>
        <taxon>Tracheophyta</taxon>
        <taxon>Spermatophyta</taxon>
        <taxon>Magnoliopsida</taxon>
        <taxon>eudicotyledons</taxon>
        <taxon>Gunneridae</taxon>
        <taxon>Pentapetalae</taxon>
        <taxon>rosids</taxon>
        <taxon>fabids</taxon>
        <taxon>Cucurbitales</taxon>
        <taxon>Cucurbitaceae</taxon>
        <taxon>Momordiceae</taxon>
        <taxon>Momordica</taxon>
    </lineage>
</organism>
<evidence type="ECO:0000305" key="1"/>
<evidence type="ECO:0007829" key="2">
    <source>
        <dbReference type="PDB" id="1MCT"/>
    </source>
</evidence>
<accession>P30709</accession>
<proteinExistence type="evidence at protein level"/>
<name>ITRA_MOMCH</name>
<comment type="function">
    <text>Inhibits trypsin.</text>
</comment>
<comment type="subcellular location">
    <subcellularLocation>
        <location>Secreted</location>
    </subcellularLocation>
</comment>
<comment type="domain">
    <text>The presence of a 'disulfide through disulfide knot' structurally defines this protein as a knottin.</text>
</comment>
<comment type="similarity">
    <text evidence="1">Belongs to the protease inhibitor I7 (squash-type serine protease inhibitor) family.</text>
</comment>